<gene>
    <name type="primary">coa5</name>
    <name type="ORF">TGas128e22.1</name>
</gene>
<comment type="function">
    <text evidence="1">Involved in an early step of the mitochondrial complex IV assembly process.</text>
</comment>
<comment type="similarity">
    <text evidence="3">Belongs to the PET191 family.</text>
</comment>
<sequence>MPKYYEEKEEDKHPCAGVKEDLKSCLLQTDCVLQEGKSPKECLKEGYCKALQVTFFECKRSILDTRARFRGRKGY</sequence>
<accession>Q28CA1</accession>
<protein>
    <recommendedName>
        <fullName>Cytochrome c oxidase assembly factor 5</fullName>
    </recommendedName>
</protein>
<evidence type="ECO:0000250" key="1"/>
<evidence type="ECO:0000255" key="2">
    <source>
        <dbReference type="PROSITE-ProRule" id="PRU01150"/>
    </source>
</evidence>
<evidence type="ECO:0000305" key="3"/>
<feature type="chain" id="PRO_0000325881" description="Cytochrome c oxidase assembly factor 5">
    <location>
        <begin position="1"/>
        <end position="75"/>
    </location>
</feature>
<feature type="domain" description="CHCH" evidence="2">
    <location>
        <begin position="28"/>
        <end position="66"/>
    </location>
</feature>
<feature type="short sequence motif" description="Cx10C motif" evidence="2">
    <location>
        <begin position="31"/>
        <end position="42"/>
    </location>
</feature>
<feature type="short sequence motif" description="Cx9C motif" evidence="2">
    <location>
        <begin position="48"/>
        <end position="58"/>
    </location>
</feature>
<feature type="disulfide bond" evidence="2">
    <location>
        <begin position="31"/>
        <end position="58"/>
    </location>
</feature>
<feature type="disulfide bond" evidence="2">
    <location>
        <begin position="42"/>
        <end position="48"/>
    </location>
</feature>
<proteinExistence type="inferred from homology"/>
<dbReference type="EMBL" id="CR942380">
    <property type="protein sequence ID" value="CAJ81515.1"/>
    <property type="molecule type" value="mRNA"/>
</dbReference>
<dbReference type="RefSeq" id="NP_001039098.1">
    <property type="nucleotide sequence ID" value="NM_001045633.1"/>
</dbReference>
<dbReference type="FunCoup" id="Q28CA1">
    <property type="interactions" value="891"/>
</dbReference>
<dbReference type="STRING" id="8364.ENSXETP00000046921"/>
<dbReference type="PaxDb" id="8364-ENSXETP00000055962"/>
<dbReference type="GeneID" id="733917"/>
<dbReference type="KEGG" id="xtr:733917"/>
<dbReference type="AGR" id="Xenbase:XB-GENE-5771975"/>
<dbReference type="CTD" id="493753"/>
<dbReference type="Xenbase" id="XB-GENE-5771975">
    <property type="gene designation" value="coa5"/>
</dbReference>
<dbReference type="eggNOG" id="KOG4114">
    <property type="taxonomic scope" value="Eukaryota"/>
</dbReference>
<dbReference type="HOGENOM" id="CLU_138069_2_2_1"/>
<dbReference type="InParanoid" id="Q28CA1"/>
<dbReference type="OMA" id="KKTPKEC"/>
<dbReference type="OrthoDB" id="282149at2759"/>
<dbReference type="PhylomeDB" id="Q28CA1"/>
<dbReference type="TreeFam" id="TF313953"/>
<dbReference type="Proteomes" id="UP000008143">
    <property type="component" value="Chromosome 2"/>
</dbReference>
<dbReference type="Bgee" id="ENSXETG00000026562">
    <property type="expression patterns" value="Expressed in testis and 12 other cell types or tissues"/>
</dbReference>
<dbReference type="InterPro" id="IPR018793">
    <property type="entry name" value="Cyt_c_oxidase_assmbl_Pet191"/>
</dbReference>
<dbReference type="PANTHER" id="PTHR28627">
    <property type="entry name" value="CYTOCHROME C OXIDASE ASSEMBLY FACTOR 5"/>
    <property type="match status" value="1"/>
</dbReference>
<dbReference type="PANTHER" id="PTHR28627:SF1">
    <property type="entry name" value="CYTOCHROME C OXIDASE ASSEMBLY FACTOR 5"/>
    <property type="match status" value="1"/>
</dbReference>
<dbReference type="Pfam" id="PF10203">
    <property type="entry name" value="Pet191_N"/>
    <property type="match status" value="1"/>
</dbReference>
<dbReference type="PROSITE" id="PS51808">
    <property type="entry name" value="CHCH"/>
    <property type="match status" value="1"/>
</dbReference>
<reference key="1">
    <citation type="submission" date="2006-10" db="EMBL/GenBank/DDBJ databases">
        <authorList>
            <consortium name="Sanger Xenopus tropicalis EST/cDNA project"/>
        </authorList>
    </citation>
    <scope>NUCLEOTIDE SEQUENCE [LARGE SCALE MRNA]</scope>
    <source>
        <tissue>Gastrula</tissue>
    </source>
</reference>
<name>COA5_XENTR</name>
<organism>
    <name type="scientific">Xenopus tropicalis</name>
    <name type="common">Western clawed frog</name>
    <name type="synonym">Silurana tropicalis</name>
    <dbReference type="NCBI Taxonomy" id="8364"/>
    <lineage>
        <taxon>Eukaryota</taxon>
        <taxon>Metazoa</taxon>
        <taxon>Chordata</taxon>
        <taxon>Craniata</taxon>
        <taxon>Vertebrata</taxon>
        <taxon>Euteleostomi</taxon>
        <taxon>Amphibia</taxon>
        <taxon>Batrachia</taxon>
        <taxon>Anura</taxon>
        <taxon>Pipoidea</taxon>
        <taxon>Pipidae</taxon>
        <taxon>Xenopodinae</taxon>
        <taxon>Xenopus</taxon>
        <taxon>Silurana</taxon>
    </lineage>
</organism>
<keyword id="KW-1015">Disulfide bond</keyword>
<keyword id="KW-1185">Reference proteome</keyword>